<accession>Q9R0S2</accession>
<accession>A2AUV7</accession>
<accession>Q9Z0J9</accession>
<name>MMP24_MOUSE</name>
<proteinExistence type="evidence at protein level"/>
<keyword id="KW-0106">Calcium</keyword>
<keyword id="KW-0130">Cell adhesion</keyword>
<keyword id="KW-1003">Cell membrane</keyword>
<keyword id="KW-0165">Cleavage on pair of basic residues</keyword>
<keyword id="KW-1015">Disulfide bond</keyword>
<keyword id="KW-0272">Extracellular matrix</keyword>
<keyword id="KW-0333">Golgi apparatus</keyword>
<keyword id="KW-0378">Hydrolase</keyword>
<keyword id="KW-0472">Membrane</keyword>
<keyword id="KW-0479">Metal-binding</keyword>
<keyword id="KW-0482">Metalloprotease</keyword>
<keyword id="KW-0645">Protease</keyword>
<keyword id="KW-1185">Reference proteome</keyword>
<keyword id="KW-0677">Repeat</keyword>
<keyword id="KW-0964">Secreted</keyword>
<keyword id="KW-0732">Signal</keyword>
<keyword id="KW-0812">Transmembrane</keyword>
<keyword id="KW-1133">Transmembrane helix</keyword>
<keyword id="KW-0862">Zinc</keyword>
<keyword id="KW-0865">Zymogen</keyword>
<feature type="signal peptide" evidence="2">
    <location>
        <begin position="1"/>
        <end position="41"/>
    </location>
</feature>
<feature type="propeptide" id="PRO_0000028848" evidence="1">
    <location>
        <begin position="42"/>
        <end position="128"/>
    </location>
</feature>
<feature type="chain" id="PRO_0000028849" description="Matrix metalloproteinase-24">
    <location>
        <begin position="129"/>
        <end position="618"/>
    </location>
</feature>
<feature type="chain" id="PRO_0000302759" description="Processed matrix metalloproteinase-24" evidence="12">
    <location>
        <begin position="129"/>
        <end position="554"/>
    </location>
</feature>
<feature type="topological domain" description="Extracellular" evidence="2">
    <location>
        <begin position="42"/>
        <end position="575"/>
    </location>
</feature>
<feature type="transmembrane region" description="Helical" evidence="2">
    <location>
        <begin position="576"/>
        <end position="596"/>
    </location>
</feature>
<feature type="topological domain" description="Cytoplasmic" evidence="2">
    <location>
        <begin position="597"/>
        <end position="618"/>
    </location>
</feature>
<feature type="repeat" description="Hemopexin 1">
    <location>
        <begin position="350"/>
        <end position="398"/>
    </location>
</feature>
<feature type="repeat" description="Hemopexin 2">
    <location>
        <begin position="399"/>
        <end position="444"/>
    </location>
</feature>
<feature type="repeat" description="Hemopexin 3">
    <location>
        <begin position="446"/>
        <end position="494"/>
    </location>
</feature>
<feature type="repeat" description="Hemopexin 4">
    <location>
        <begin position="495"/>
        <end position="542"/>
    </location>
</feature>
<feature type="region of interest" description="Disordered" evidence="4">
    <location>
        <begin position="296"/>
        <end position="352"/>
    </location>
</feature>
<feature type="short sequence motif" description="Cysteine switch" evidence="1">
    <location>
        <begin position="110"/>
        <end position="117"/>
    </location>
</feature>
<feature type="short sequence motif" description="PDZ-binding">
    <location>
        <begin position="616"/>
        <end position="618"/>
    </location>
</feature>
<feature type="compositionally biased region" description="Pro residues" evidence="4">
    <location>
        <begin position="302"/>
        <end position="314"/>
    </location>
</feature>
<feature type="active site" evidence="3 5">
    <location>
        <position position="256"/>
    </location>
</feature>
<feature type="binding site" description="in inhibited form" evidence="1">
    <location>
        <position position="112"/>
    </location>
    <ligand>
        <name>Zn(2+)</name>
        <dbReference type="ChEBI" id="CHEBI:29105"/>
        <note>catalytic</note>
    </ligand>
</feature>
<feature type="binding site" evidence="3">
    <location>
        <position position="255"/>
    </location>
    <ligand>
        <name>Zn(2+)</name>
        <dbReference type="ChEBI" id="CHEBI:29105"/>
        <note>catalytic</note>
    </ligand>
</feature>
<feature type="binding site" evidence="3">
    <location>
        <position position="259"/>
    </location>
    <ligand>
        <name>Zn(2+)</name>
        <dbReference type="ChEBI" id="CHEBI:29105"/>
        <note>catalytic</note>
    </ligand>
</feature>
<feature type="binding site" evidence="3">
    <location>
        <position position="265"/>
    </location>
    <ligand>
        <name>Zn(2+)</name>
        <dbReference type="ChEBI" id="CHEBI:29105"/>
        <note>catalytic</note>
    </ligand>
</feature>
<feature type="site" description="Cleavage; by furin">
    <location>
        <begin position="554"/>
        <end position="555"/>
    </location>
</feature>
<feature type="disulfide bond" evidence="1">
    <location>
        <begin position="353"/>
        <end position="542"/>
    </location>
</feature>
<feature type="mutagenesis site" description="Loss of function. Does not prevent proteolytic processing." evidence="5 7">
    <original>E</original>
    <variation>A</variation>
    <location>
        <position position="256"/>
    </location>
</feature>
<feature type="mutagenesis site" description="Abolishes proteolytic processing. Gain of function mutant.">
    <location>
        <begin position="549"/>
        <end position="554"/>
    </location>
</feature>
<feature type="mutagenesis site" description="Impaired recycling affecting its internalization, leading to decreased activity on the plasma surface." evidence="9">
    <location>
        <begin position="616"/>
        <end position="618"/>
    </location>
</feature>
<feature type="sequence conflict" description="In Ref. 2; CAA09055." evidence="12" ref="2">
    <original>GRAAPGQASRWSGWRAPGRLLP</original>
    <variation>AALRRARPRAGALAGPGAAA</variation>
    <location>
        <begin position="7"/>
        <end position="28"/>
    </location>
</feature>
<feature type="sequence conflict" description="In Ref. 2; CAA09055." evidence="12" ref="2">
    <original>KPAGADA</original>
    <variation>SRPGR</variation>
    <location>
        <begin position="44"/>
        <end position="50"/>
    </location>
</feature>
<feature type="sequence conflict" description="In Ref. 1; BAA82966." evidence="12" ref="1">
    <original>A</original>
    <variation>T</variation>
    <location>
        <position position="46"/>
    </location>
</feature>
<feature type="sequence conflict" description="In Ref. 2; CAA09055." evidence="12" ref="2">
    <original>LEP</original>
    <variation>SGA</variation>
    <location>
        <begin position="306"/>
        <end position="308"/>
    </location>
</feature>
<feature type="sequence conflict" description="In Ref. 2; CAA09055." evidence="12" ref="2">
    <original>R</original>
    <variation>K</variation>
    <location>
        <position position="326"/>
    </location>
</feature>
<feature type="sequence conflict" description="In Ref. 2; CAA09055." evidence="12" ref="2">
    <original>PPLGD</original>
    <variation>RPWG</variation>
    <location>
        <begin position="337"/>
        <end position="341"/>
    </location>
</feature>
<feature type="sequence conflict" description="In Ref. 2; CAA09055." evidence="12" ref="2">
    <original>I</original>
    <variation>KP</variation>
    <location>
        <position position="449"/>
    </location>
</feature>
<feature type="sequence conflict" description="In Ref. 2; CAA09055." evidence="12" ref="2">
    <original>I</original>
    <variation>L</variation>
    <location>
        <position position="502"/>
    </location>
</feature>
<feature type="sequence conflict" description="In Ref. 2; CAA09055." evidence="12" ref="2">
    <original>L</original>
    <variation>R</variation>
    <location>
        <position position="589"/>
    </location>
</feature>
<evidence type="ECO:0000250" key="1"/>
<evidence type="ECO:0000255" key="2"/>
<evidence type="ECO:0000255" key="3">
    <source>
        <dbReference type="PROSITE-ProRule" id="PRU10095"/>
    </source>
</evidence>
<evidence type="ECO:0000256" key="4">
    <source>
        <dbReference type="SAM" id="MobiDB-lite"/>
    </source>
</evidence>
<evidence type="ECO:0000269" key="5">
    <source>
    </source>
</evidence>
<evidence type="ECO:0000269" key="6">
    <source>
    </source>
</evidence>
<evidence type="ECO:0000269" key="7">
    <source>
    </source>
</evidence>
<evidence type="ECO:0000269" key="8">
    <source>
    </source>
</evidence>
<evidence type="ECO:0000269" key="9">
    <source>
    </source>
</evidence>
<evidence type="ECO:0000269" key="10">
    <source>
    </source>
</evidence>
<evidence type="ECO:0000269" key="11">
    <source>
    </source>
</evidence>
<evidence type="ECO:0000305" key="12"/>
<reference key="1">
    <citation type="submission" date="1998-12" db="EMBL/GenBank/DDBJ databases">
        <title>Identification of a new membrane-type matrix metalloproteinase, MT5-MMP, that is expressed predominantly in cerebellum.</title>
        <authorList>
            <person name="Seiki M."/>
        </authorList>
    </citation>
    <scope>NUCLEOTIDE SEQUENCE [MRNA]</scope>
</reference>
<reference key="2">
    <citation type="journal article" date="1999" name="J. Biol. Chem.">
        <title>Identification and characterization of the fifth membrane-type matrix metalloproteinase MT5-MMP.</title>
        <authorList>
            <person name="Pei D.Q."/>
        </authorList>
    </citation>
    <scope>NUCLEOTIDE SEQUENCE [MRNA]</scope>
    <scope>MUTAGENESIS OF GLU-256</scope>
    <scope>ACTIVE SITE</scope>
    <source>
        <strain>BALB/cJ</strain>
        <tissue>Brain</tissue>
    </source>
</reference>
<reference key="3">
    <citation type="journal article" date="2009" name="PLoS Biol.">
        <title>Lineage-specific biology revealed by a finished genome assembly of the mouse.</title>
        <authorList>
            <person name="Church D.M."/>
            <person name="Goodstadt L."/>
            <person name="Hillier L.W."/>
            <person name="Zody M.C."/>
            <person name="Goldstein S."/>
            <person name="She X."/>
            <person name="Bult C.J."/>
            <person name="Agarwala R."/>
            <person name="Cherry J.L."/>
            <person name="DiCuccio M."/>
            <person name="Hlavina W."/>
            <person name="Kapustin Y."/>
            <person name="Meric P."/>
            <person name="Maglott D."/>
            <person name="Birtle Z."/>
            <person name="Marques A.C."/>
            <person name="Graves T."/>
            <person name="Zhou S."/>
            <person name="Teague B."/>
            <person name="Potamousis K."/>
            <person name="Churas C."/>
            <person name="Place M."/>
            <person name="Herschleb J."/>
            <person name="Runnheim R."/>
            <person name="Forrest D."/>
            <person name="Amos-Landgraf J."/>
            <person name="Schwartz D.C."/>
            <person name="Cheng Z."/>
            <person name="Lindblad-Toh K."/>
            <person name="Eichler E.E."/>
            <person name="Ponting C.P."/>
        </authorList>
    </citation>
    <scope>NUCLEOTIDE SEQUENCE [LARGE SCALE GENOMIC DNA]</scope>
    <source>
        <strain>C57BL/6J</strain>
    </source>
</reference>
<reference key="4">
    <citation type="journal article" date="1999" name="FEBS Lett.">
        <title>Expression, purification and characterization of recombinant mouse MT5-MMP protein products.</title>
        <authorList>
            <person name="Wang X."/>
            <person name="Yi J."/>
            <person name="Lei J."/>
            <person name="Pei D.Q."/>
        </authorList>
    </citation>
    <scope>FUNCTION</scope>
</reference>
<reference key="5">
    <citation type="journal article" date="2001" name="J. Biol. Chem.">
        <title>Shedding of membrane type matrix metalloproteinase 5 by a furin-type convertase: a potential mechanism for down-regulation.</title>
        <authorList>
            <person name="Wang X."/>
            <person name="Pei D."/>
        </authorList>
    </citation>
    <scope>SUBCELLULAR LOCATION</scope>
    <scope>PROTEOLYTIC PROCESSING</scope>
    <scope>MUTAGENESIS OF GLU-256 AND 549-ARG--ARG-555</scope>
</reference>
<reference key="6">
    <citation type="journal article" date="2001" name="Cell Growth Differ.">
        <title>Membrane-type 5 matrix metalloproteinase is expressed in differentiated neurons and regulates axonal growth.</title>
        <authorList>
            <person name="Hayashita-Kinoh H."/>
            <person name="Kinoh H."/>
            <person name="Okada A."/>
            <person name="Komori K."/>
            <person name="Itoh Y."/>
            <person name="Chiba T."/>
            <person name="Kajita M."/>
            <person name="Yana I."/>
            <person name="Seiki M."/>
        </authorList>
    </citation>
    <scope>FUNCTION</scope>
    <scope>TISSUE SPECIFICITY</scope>
    <scope>DEVELOPMENTAL STAGE</scope>
</reference>
<reference key="7">
    <citation type="journal article" date="2004" name="J. Biol. Chem.">
        <title>Mint-3 regulates the retrieval of the internalized membrane-type matrix metalloproteinase, MT5-MMP, to the plasma membrane by binding to its carboxyl end motif EWV.</title>
        <authorList>
            <person name="Wang P."/>
            <person name="Wang X."/>
            <person name="Pei D."/>
        </authorList>
    </citation>
    <scope>SUBCELLULAR LOCATION</scope>
    <scope>INTERACTION WITH APBA3</scope>
    <scope>MUTAGENESIS OF 616-GLU--VAL-618</scope>
</reference>
<reference key="8">
    <citation type="journal article" date="2009" name="Proc. Natl. Acad. Sci. U.S.A.">
        <title>Metalloproteinase MT5-MMP is an essential modulator of neuro-immune interactions in thermal pain stimulation.</title>
        <authorList>
            <person name="Folgueras A.R."/>
            <person name="Valdes-Sanchez T."/>
            <person name="Llano E."/>
            <person name="Menendez L."/>
            <person name="Baamonde A."/>
            <person name="Denlinger B.L."/>
            <person name="Belmonte C."/>
            <person name="Juarez L."/>
            <person name="Lastra A."/>
            <person name="Garcia-Suarez O."/>
            <person name="Astudillo A."/>
            <person name="Kirstein M."/>
            <person name="Pendas A.M."/>
            <person name="Farinas I."/>
            <person name="Lopez-Otin C."/>
        </authorList>
    </citation>
    <scope>FUNCTION</scope>
    <scope>TISSUE SPECIFICITY</scope>
    <scope>DISRUPTION PHENOTYPE</scope>
</reference>
<reference key="9">
    <citation type="journal article" date="2014" name="Nat. Cell Biol.">
        <title>MT5-MMP regulates adult neural stem cell functional quiescence through the cleavage of N-cadherin.</title>
        <authorList>
            <person name="Porlan E."/>
            <person name="Marti-Prado B."/>
            <person name="Morante-Redolat J.M."/>
            <person name="Consiglio A."/>
            <person name="Delgado A.C."/>
            <person name="Kypta R."/>
            <person name="Lopez-Otin C."/>
            <person name="Kirstein M."/>
            <person name="Farinas I."/>
        </authorList>
    </citation>
    <scope>FUNCTION</scope>
    <scope>TISSUE SPECIFICITY</scope>
    <scope>DISRUPTION PHENOTYPE</scope>
</reference>
<gene>
    <name type="primary">Mmp24</name>
    <name type="synonym">Mmp21</name>
    <name type="synonym">Mt5mmp</name>
</gene>
<comment type="function">
    <text evidence="6 8 10 11">Metalloprotease that mediates cleavage of N-cadherin (CDH2) and acts as a regulator of neuro-immune interactions and neural stem cell quiescence (PubMed:19805319, PubMed:24952463). Involved in cell-cell interactions between nociceptive neurites and mast cells, possibly by mediating cleavage of CDH2, thereby acting as a mediator of peripheral thermal nociception and inflammatory hyperalgesia (PubMed:19805319). Key regulator of neural stem cells quiescence by mediating cleavage of CDH2, affecting CDH2-mediated anchorage of neural stem cells to ependymocytes in the adult subependymal zone, leading to modulate their quiescence (PubMed:24952463). May play a role in axonal growth (PubMed:11714638). Able to activate progelatinase A. May also be a proteoglycanase involved in degradation of proteoglycans, such as dermatan sulfate and chondroitin sulfate proteoglycans. Cleaves partially fibronectin, but not collagen type I, nor laminin (PubMed:10622708).</text>
</comment>
<comment type="cofactor">
    <cofactor evidence="1">
        <name>Zn(2+)</name>
        <dbReference type="ChEBI" id="CHEBI:29105"/>
    </cofactor>
    <text evidence="1">Binds 1 zinc ion per subunit.</text>
</comment>
<comment type="cofactor">
    <cofactor evidence="1">
        <name>Ca(2+)</name>
        <dbReference type="ChEBI" id="CHEBI:29108"/>
    </cofactor>
</comment>
<comment type="subunit">
    <text evidence="1 9">Interacts with GRIP1 and GRIP2 (By similarity). Interacts (via PDZ-binding motif) with APBA3 (via PDZ domain).</text>
</comment>
<comment type="subcellular location">
    <molecule>Matrix metalloproteinase-24</molecule>
    <subcellularLocation>
        <location>Cell membrane</location>
        <topology>Single-pass type I membrane protein</topology>
    </subcellularLocation>
    <subcellularLocation>
        <location>Golgi apparatus</location>
        <location>trans-Golgi network membrane</location>
        <topology>Single-pass type I membrane protein</topology>
    </subcellularLocation>
    <text evidence="9">Recycled back to the plasma membrane through the trans-Golgi network via interaction with APBA3.</text>
</comment>
<comment type="subcellular location">
    <molecule>Processed matrix metalloproteinase-24</molecule>
    <subcellularLocation>
        <location>Secreted</location>
        <location>Extracellular space</location>
        <location>Extracellular matrix</location>
    </subcellularLocation>
    <text evidence="7">Also shed from cell surface as soluble proteinase, by a proteolytic cleavage.</text>
</comment>
<comment type="tissue specificity">
    <text evidence="8 10 11">Mainly expressed in neuronal cells of both central and peripheral nervous systems. Expressed by CGRP-containing peptidergic nociceptors in dorsal root ganglia (PubMed:19805319). Expressed in adult neural stem cell and ependymocytes (PubMed:24952463). Expressed at low level in testis.</text>
</comment>
<comment type="developmental stage">
    <text evidence="8">Expressed at day 11 until day 15, before dropping around day 17 before birth. Expressed in the cerebrum in embryos, but it declines after birth, while expression in the cerebellum starts to increase postnatally and continues thereafter.</text>
</comment>
<comment type="domain">
    <text>The conserved cysteine present in the cysteine-switch motif binds the catalytic zinc ion, thus inhibiting the enzyme. The dissociation of the cysteine from the zinc ion upon the activation-peptide release activates the enzyme.</text>
</comment>
<comment type="domain">
    <text evidence="9">The PDZ-binding motif (also named EWV motif) is required for interaction with PDZ domains of APBA3 and recycling through the trans-Golgi network.</text>
</comment>
<comment type="PTM">
    <text>Cleaved by a furin endopeptidase in the trans-Golgi network.</text>
</comment>
<comment type="disruption phenotype">
    <text evidence="10 11">No visible phenotype. Mice are viable, develop normally and are fertile. They however display enhanced sensitivity to noxious thermal stimuli under basal conditions characterized by an absence of thermal inflammatory hyperalgesia (PubMed:19805319). In subependymal zone, more intense signal is observed for extracellular N-cadherin (Cdh2) as well as increased levels of full-length Cdh2 without changes in Cdh2 messenger RNA levels (PubMed:24952463).</text>
</comment>
<comment type="similarity">
    <text evidence="12">Belongs to the peptidase M10A family.</text>
</comment>
<organism>
    <name type="scientific">Mus musculus</name>
    <name type="common">Mouse</name>
    <dbReference type="NCBI Taxonomy" id="10090"/>
    <lineage>
        <taxon>Eukaryota</taxon>
        <taxon>Metazoa</taxon>
        <taxon>Chordata</taxon>
        <taxon>Craniata</taxon>
        <taxon>Vertebrata</taxon>
        <taxon>Euteleostomi</taxon>
        <taxon>Mammalia</taxon>
        <taxon>Eutheria</taxon>
        <taxon>Euarchontoglires</taxon>
        <taxon>Glires</taxon>
        <taxon>Rodentia</taxon>
        <taxon>Myomorpha</taxon>
        <taxon>Muroidea</taxon>
        <taxon>Muridae</taxon>
        <taxon>Murinae</taxon>
        <taxon>Mus</taxon>
        <taxon>Mus</taxon>
    </lineage>
</organism>
<sequence>MPRSRGGRAAPGQASRWSGWRAPGRLLPLLPALCCLAAAAGAGKPAGADAPFAGQNWLKSYGYLLPYESRASALHSGKALQSAVSTMQQFYGIPVTGVLDQTTIEWMKKPRCGVPDHPHLSRRRRNKRYALTGQKWRQKHITYSIHNYTPKVGELDTRKAIRQAFDVWQKVTPLTFEEVPYHEIKSDRKEADIMIFFASGFHGDSSPFDGEGGFLAHAYFPGPGIGGDTHFDSDEPWTLGNANHDGNDLFLVAVHELGHALGLEHSNDPSAIMAPFYQYMETHNFKLPQDDLQGIQKIYGPPAEPLEPTRPLPTLPVRRIHSPSERKHERHPRPPRPPLGDRPSTPGAKPNICDGNFNTVALFRGEMFVFKDRWFWRLRNNRVQEGYPMQIEQFWKGLPARIDAAYERADGRFVFFKGDKYWVFKEVTVEPGYPHSLGELGSCLPREGIDTALRWEPVGKTYFFKGERYWRYSEERRATDPGYPKPITVWKGIPQAPQGAFISKEGYYTYFYKGRDYWKFDNQKLSVEPGYPRNILRDWMGCKQKEVERRKERRLPQDDVDIMVTIDDVPGSVNAVAVVVPCTLSLCLLVLLYTIFQFKNKAGPQPVTYYKRPVQEWV</sequence>
<dbReference type="EC" id="3.4.24.-"/>
<dbReference type="EMBL" id="AB021226">
    <property type="protein sequence ID" value="BAA82966.1"/>
    <property type="molecule type" value="mRNA"/>
</dbReference>
<dbReference type="EMBL" id="AJ010262">
    <property type="protein sequence ID" value="CAA09055.1"/>
    <property type="molecule type" value="mRNA"/>
</dbReference>
<dbReference type="EMBL" id="AL929233">
    <property type="status" value="NOT_ANNOTATED_CDS"/>
    <property type="molecule type" value="Genomic_DNA"/>
</dbReference>
<dbReference type="CCDS" id="CCDS16955.1"/>
<dbReference type="RefSeq" id="NP_034938.3">
    <property type="nucleotide sequence ID" value="NM_010808.4"/>
</dbReference>
<dbReference type="SMR" id="Q9R0S2"/>
<dbReference type="FunCoup" id="Q9R0S2">
    <property type="interactions" value="266"/>
</dbReference>
<dbReference type="STRING" id="10090.ENSMUSP00000029141"/>
<dbReference type="MEROPS" id="M10.023"/>
<dbReference type="iPTMnet" id="Q9R0S2"/>
<dbReference type="PhosphoSitePlus" id="Q9R0S2"/>
<dbReference type="PaxDb" id="10090-ENSMUSP00000029141"/>
<dbReference type="ProteomicsDB" id="291477"/>
<dbReference type="Antibodypedia" id="5282">
    <property type="antibodies" value="208 antibodies from 31 providers"/>
</dbReference>
<dbReference type="DNASU" id="17391"/>
<dbReference type="Ensembl" id="ENSMUST00000029141.6">
    <property type="protein sequence ID" value="ENSMUSP00000029141.6"/>
    <property type="gene ID" value="ENSMUSG00000027612.8"/>
</dbReference>
<dbReference type="GeneID" id="17391"/>
<dbReference type="KEGG" id="mmu:17391"/>
<dbReference type="UCSC" id="uc008nlj.1">
    <property type="organism name" value="mouse"/>
</dbReference>
<dbReference type="AGR" id="MGI:1341867"/>
<dbReference type="CTD" id="10893"/>
<dbReference type="MGI" id="MGI:1341867">
    <property type="gene designation" value="Mmp24"/>
</dbReference>
<dbReference type="VEuPathDB" id="HostDB:ENSMUSG00000027612"/>
<dbReference type="eggNOG" id="KOG1565">
    <property type="taxonomic scope" value="Eukaryota"/>
</dbReference>
<dbReference type="GeneTree" id="ENSGT00940000158315"/>
<dbReference type="HOGENOM" id="CLU_015489_8_1_1"/>
<dbReference type="InParanoid" id="Q9R0S2"/>
<dbReference type="OMA" id="AMTQHYY"/>
<dbReference type="OrthoDB" id="406838at2759"/>
<dbReference type="PhylomeDB" id="Q9R0S2"/>
<dbReference type="TreeFam" id="TF352396"/>
<dbReference type="Reactome" id="R-MMU-1592389">
    <property type="pathway name" value="Activation of Matrix Metalloproteinases"/>
</dbReference>
<dbReference type="BioGRID-ORCS" id="17391">
    <property type="hits" value="2 hits in 78 CRISPR screens"/>
</dbReference>
<dbReference type="ChiTaRS" id="Mmp24">
    <property type="organism name" value="mouse"/>
</dbReference>
<dbReference type="PRO" id="PR:Q9R0S2"/>
<dbReference type="Proteomes" id="UP000000589">
    <property type="component" value="Chromosome 2"/>
</dbReference>
<dbReference type="RNAct" id="Q9R0S2">
    <property type="molecule type" value="protein"/>
</dbReference>
<dbReference type="Bgee" id="ENSMUSG00000027612">
    <property type="expression patterns" value="Expressed in embryonic brain and 124 other cell types or tissues"/>
</dbReference>
<dbReference type="GO" id="GO:0031012">
    <property type="term" value="C:extracellular matrix"/>
    <property type="evidence" value="ECO:0007669"/>
    <property type="project" value="InterPro"/>
</dbReference>
<dbReference type="GO" id="GO:0005576">
    <property type="term" value="C:extracellular region"/>
    <property type="evidence" value="ECO:0007669"/>
    <property type="project" value="UniProtKB-KW"/>
</dbReference>
<dbReference type="GO" id="GO:0005886">
    <property type="term" value="C:plasma membrane"/>
    <property type="evidence" value="ECO:0000314"/>
    <property type="project" value="UniProtKB"/>
</dbReference>
<dbReference type="GO" id="GO:0032588">
    <property type="term" value="C:trans-Golgi network membrane"/>
    <property type="evidence" value="ECO:0000314"/>
    <property type="project" value="UniProtKB"/>
</dbReference>
<dbReference type="GO" id="GO:0045296">
    <property type="term" value="F:cadherin binding"/>
    <property type="evidence" value="ECO:0000353"/>
    <property type="project" value="UniProtKB"/>
</dbReference>
<dbReference type="GO" id="GO:0004222">
    <property type="term" value="F:metalloendopeptidase activity"/>
    <property type="evidence" value="ECO:0000314"/>
    <property type="project" value="UniProtKB"/>
</dbReference>
<dbReference type="GO" id="GO:0008270">
    <property type="term" value="F:zinc ion binding"/>
    <property type="evidence" value="ECO:0007669"/>
    <property type="project" value="InterPro"/>
</dbReference>
<dbReference type="GO" id="GO:0044331">
    <property type="term" value="P:cell-cell adhesion mediated by cadherin"/>
    <property type="evidence" value="ECO:0000314"/>
    <property type="project" value="UniProtKB"/>
</dbReference>
<dbReference type="GO" id="GO:0098742">
    <property type="term" value="P:cell-cell adhesion via plasma-membrane adhesion molecules"/>
    <property type="evidence" value="ECO:0000315"/>
    <property type="project" value="UniProtKB"/>
</dbReference>
<dbReference type="GO" id="GO:0050965">
    <property type="term" value="P:detection of temperature stimulus involved in sensory perception of pain"/>
    <property type="evidence" value="ECO:0000315"/>
    <property type="project" value="UniProtKB"/>
</dbReference>
<dbReference type="GO" id="GO:0010001">
    <property type="term" value="P:glial cell differentiation"/>
    <property type="evidence" value="ECO:0000314"/>
    <property type="project" value="UniProtKB"/>
</dbReference>
<dbReference type="GO" id="GO:0097150">
    <property type="term" value="P:neuronal stem cell population maintenance"/>
    <property type="evidence" value="ECO:0000314"/>
    <property type="project" value="UniProtKB"/>
</dbReference>
<dbReference type="GO" id="GO:0006508">
    <property type="term" value="P:proteolysis"/>
    <property type="evidence" value="ECO:0000315"/>
    <property type="project" value="UniProtKB"/>
</dbReference>
<dbReference type="CDD" id="cd00094">
    <property type="entry name" value="HX"/>
    <property type="match status" value="1"/>
</dbReference>
<dbReference type="CDD" id="cd04278">
    <property type="entry name" value="ZnMc_MMP"/>
    <property type="match status" value="1"/>
</dbReference>
<dbReference type="FunFam" id="3.40.390.10:FF:000005">
    <property type="entry name" value="Matrix metallopeptidase 16"/>
    <property type="match status" value="1"/>
</dbReference>
<dbReference type="FunFam" id="2.110.10.10:FF:000001">
    <property type="entry name" value="Matrix metallopeptidase 24"/>
    <property type="match status" value="1"/>
</dbReference>
<dbReference type="Gene3D" id="3.40.390.10">
    <property type="entry name" value="Collagenase (Catalytic Domain)"/>
    <property type="match status" value="1"/>
</dbReference>
<dbReference type="Gene3D" id="2.110.10.10">
    <property type="entry name" value="Hemopexin-like domain"/>
    <property type="match status" value="1"/>
</dbReference>
<dbReference type="InterPro" id="IPR000585">
    <property type="entry name" value="Hemopexin-like_dom"/>
</dbReference>
<dbReference type="InterPro" id="IPR036375">
    <property type="entry name" value="Hemopexin-like_dom_sf"/>
</dbReference>
<dbReference type="InterPro" id="IPR018487">
    <property type="entry name" value="Hemopexin-like_repeat"/>
</dbReference>
<dbReference type="InterPro" id="IPR018486">
    <property type="entry name" value="Hemopexin_CS"/>
</dbReference>
<dbReference type="InterPro" id="IPR033739">
    <property type="entry name" value="M10A_MMP"/>
</dbReference>
<dbReference type="InterPro" id="IPR024079">
    <property type="entry name" value="MetalloPept_cat_dom_sf"/>
</dbReference>
<dbReference type="InterPro" id="IPR001818">
    <property type="entry name" value="Pept_M10_metallopeptidase"/>
</dbReference>
<dbReference type="InterPro" id="IPR021190">
    <property type="entry name" value="Pept_M10A"/>
</dbReference>
<dbReference type="InterPro" id="IPR021805">
    <property type="entry name" value="Pept_M10A_metallopeptidase_C"/>
</dbReference>
<dbReference type="InterPro" id="IPR006026">
    <property type="entry name" value="Peptidase_Metallo"/>
</dbReference>
<dbReference type="InterPro" id="IPR002477">
    <property type="entry name" value="Peptidoglycan-bd-like"/>
</dbReference>
<dbReference type="InterPro" id="IPR036365">
    <property type="entry name" value="PGBD-like_sf"/>
</dbReference>
<dbReference type="PANTHER" id="PTHR10201">
    <property type="entry name" value="MATRIX METALLOPROTEINASE"/>
    <property type="match status" value="1"/>
</dbReference>
<dbReference type="PANTHER" id="PTHR10201:SF138">
    <property type="entry name" value="MATRIX METALLOPROTEINASE-24"/>
    <property type="match status" value="1"/>
</dbReference>
<dbReference type="Pfam" id="PF11857">
    <property type="entry name" value="DUF3377"/>
    <property type="match status" value="1"/>
</dbReference>
<dbReference type="Pfam" id="PF00045">
    <property type="entry name" value="Hemopexin"/>
    <property type="match status" value="4"/>
</dbReference>
<dbReference type="Pfam" id="PF00413">
    <property type="entry name" value="Peptidase_M10"/>
    <property type="match status" value="1"/>
</dbReference>
<dbReference type="Pfam" id="PF01471">
    <property type="entry name" value="PG_binding_1"/>
    <property type="match status" value="1"/>
</dbReference>
<dbReference type="PIRSF" id="PIRSF001191">
    <property type="entry name" value="Peptidase_M10A_matrix"/>
    <property type="match status" value="1"/>
</dbReference>
<dbReference type="PRINTS" id="PR00138">
    <property type="entry name" value="MATRIXIN"/>
</dbReference>
<dbReference type="SMART" id="SM00120">
    <property type="entry name" value="HX"/>
    <property type="match status" value="4"/>
</dbReference>
<dbReference type="SMART" id="SM00235">
    <property type="entry name" value="ZnMc"/>
    <property type="match status" value="1"/>
</dbReference>
<dbReference type="SUPFAM" id="SSF50923">
    <property type="entry name" value="Hemopexin-like domain"/>
    <property type="match status" value="1"/>
</dbReference>
<dbReference type="SUPFAM" id="SSF55486">
    <property type="entry name" value="Metalloproteases ('zincins'), catalytic domain"/>
    <property type="match status" value="1"/>
</dbReference>
<dbReference type="SUPFAM" id="SSF47090">
    <property type="entry name" value="PGBD-like"/>
    <property type="match status" value="1"/>
</dbReference>
<dbReference type="PROSITE" id="PS00024">
    <property type="entry name" value="HEMOPEXIN"/>
    <property type="match status" value="1"/>
</dbReference>
<dbReference type="PROSITE" id="PS51642">
    <property type="entry name" value="HEMOPEXIN_2"/>
    <property type="match status" value="4"/>
</dbReference>
<dbReference type="PROSITE" id="PS00142">
    <property type="entry name" value="ZINC_PROTEASE"/>
    <property type="match status" value="1"/>
</dbReference>
<protein>
    <recommendedName>
        <fullName>Matrix metalloproteinase-24</fullName>
        <shortName>MMP-24</shortName>
        <ecNumber>3.4.24.-</ecNumber>
    </recommendedName>
    <alternativeName>
        <fullName>Matrix metalloproteinase-21</fullName>
        <shortName>MMP-21</shortName>
    </alternativeName>
    <alternativeName>
        <fullName>Membrane-type matrix metalloproteinase 5</fullName>
        <shortName>MT-MMP 5</shortName>
        <shortName>MTMMP5</shortName>
    </alternativeName>
    <alternativeName>
        <fullName>Membrane-type-5 matrix metalloproteinase</fullName>
        <shortName>MT5-MMP</shortName>
        <shortName>MT5MMP</shortName>
    </alternativeName>
    <component>
        <recommendedName>
            <fullName>Processed matrix metalloproteinase-24</fullName>
        </recommendedName>
    </component>
</protein>